<protein>
    <recommendedName>
        <fullName evidence="1">6,7-dimethyl-8-ribityllumazine synthase</fullName>
        <shortName evidence="1">DMRL synthase</shortName>
        <shortName evidence="1">LS</shortName>
        <shortName evidence="1">Lumazine synthase</shortName>
        <ecNumber evidence="1">2.5.1.78</ecNumber>
    </recommendedName>
</protein>
<comment type="function">
    <text evidence="1">Catalyzes the formation of 6,7-dimethyl-8-ribityllumazine by condensation of 5-amino-6-(D-ribitylamino)uracil with 3,4-dihydroxy-2-butanone 4-phosphate. This is the penultimate step in the biosynthesis of riboflavin.</text>
</comment>
<comment type="catalytic activity">
    <reaction evidence="1">
        <text>(2S)-2-hydroxy-3-oxobutyl phosphate + 5-amino-6-(D-ribitylamino)uracil = 6,7-dimethyl-8-(1-D-ribityl)lumazine + phosphate + 2 H2O + H(+)</text>
        <dbReference type="Rhea" id="RHEA:26152"/>
        <dbReference type="ChEBI" id="CHEBI:15377"/>
        <dbReference type="ChEBI" id="CHEBI:15378"/>
        <dbReference type="ChEBI" id="CHEBI:15934"/>
        <dbReference type="ChEBI" id="CHEBI:43474"/>
        <dbReference type="ChEBI" id="CHEBI:58201"/>
        <dbReference type="ChEBI" id="CHEBI:58830"/>
        <dbReference type="EC" id="2.5.1.78"/>
    </reaction>
</comment>
<comment type="pathway">
    <text evidence="1">Cofactor biosynthesis; riboflavin biosynthesis; riboflavin from 2-hydroxy-3-oxobutyl phosphate and 5-amino-6-(D-ribitylamino)uracil: step 1/2.</text>
</comment>
<comment type="similarity">
    <text evidence="1">Belongs to the DMRL synthase family.</text>
</comment>
<gene>
    <name evidence="1" type="primary">ribH</name>
    <name type="ordered locus">Dtpsy_2257</name>
</gene>
<evidence type="ECO:0000255" key="1">
    <source>
        <dbReference type="HAMAP-Rule" id="MF_00178"/>
    </source>
</evidence>
<proteinExistence type="inferred from homology"/>
<keyword id="KW-1185">Reference proteome</keyword>
<keyword id="KW-0686">Riboflavin biosynthesis</keyword>
<keyword id="KW-0808">Transferase</keyword>
<dbReference type="EC" id="2.5.1.78" evidence="1"/>
<dbReference type="EMBL" id="CP001392">
    <property type="protein sequence ID" value="ACM33695.1"/>
    <property type="molecule type" value="Genomic_DNA"/>
</dbReference>
<dbReference type="RefSeq" id="WP_015913681.1">
    <property type="nucleotide sequence ID" value="NC_011992.1"/>
</dbReference>
<dbReference type="SMR" id="B9MBL6"/>
<dbReference type="KEGG" id="dia:Dtpsy_2257"/>
<dbReference type="eggNOG" id="COG0054">
    <property type="taxonomic scope" value="Bacteria"/>
</dbReference>
<dbReference type="HOGENOM" id="CLU_089358_1_2_4"/>
<dbReference type="UniPathway" id="UPA00275">
    <property type="reaction ID" value="UER00404"/>
</dbReference>
<dbReference type="Proteomes" id="UP000000450">
    <property type="component" value="Chromosome"/>
</dbReference>
<dbReference type="GO" id="GO:0005829">
    <property type="term" value="C:cytosol"/>
    <property type="evidence" value="ECO:0007669"/>
    <property type="project" value="TreeGrafter"/>
</dbReference>
<dbReference type="GO" id="GO:0009349">
    <property type="term" value="C:riboflavin synthase complex"/>
    <property type="evidence" value="ECO:0007669"/>
    <property type="project" value="InterPro"/>
</dbReference>
<dbReference type="GO" id="GO:0000906">
    <property type="term" value="F:6,7-dimethyl-8-ribityllumazine synthase activity"/>
    <property type="evidence" value="ECO:0007669"/>
    <property type="project" value="UniProtKB-UniRule"/>
</dbReference>
<dbReference type="GO" id="GO:0009231">
    <property type="term" value="P:riboflavin biosynthetic process"/>
    <property type="evidence" value="ECO:0007669"/>
    <property type="project" value="UniProtKB-UniRule"/>
</dbReference>
<dbReference type="CDD" id="cd09209">
    <property type="entry name" value="Lumazine_synthase-I"/>
    <property type="match status" value="1"/>
</dbReference>
<dbReference type="Gene3D" id="3.40.50.960">
    <property type="entry name" value="Lumazine/riboflavin synthase"/>
    <property type="match status" value="1"/>
</dbReference>
<dbReference type="HAMAP" id="MF_00178">
    <property type="entry name" value="Lumazine_synth"/>
    <property type="match status" value="1"/>
</dbReference>
<dbReference type="InterPro" id="IPR034964">
    <property type="entry name" value="LS"/>
</dbReference>
<dbReference type="InterPro" id="IPR002180">
    <property type="entry name" value="LS/RS"/>
</dbReference>
<dbReference type="InterPro" id="IPR036467">
    <property type="entry name" value="LS/RS_sf"/>
</dbReference>
<dbReference type="NCBIfam" id="TIGR00114">
    <property type="entry name" value="lumazine-synth"/>
    <property type="match status" value="1"/>
</dbReference>
<dbReference type="PANTHER" id="PTHR21058:SF0">
    <property type="entry name" value="6,7-DIMETHYL-8-RIBITYLLUMAZINE SYNTHASE"/>
    <property type="match status" value="1"/>
</dbReference>
<dbReference type="PANTHER" id="PTHR21058">
    <property type="entry name" value="6,7-DIMETHYL-8-RIBITYLLUMAZINE SYNTHASE DMRL SYNTHASE LUMAZINE SYNTHASE"/>
    <property type="match status" value="1"/>
</dbReference>
<dbReference type="Pfam" id="PF00885">
    <property type="entry name" value="DMRL_synthase"/>
    <property type="match status" value="1"/>
</dbReference>
<dbReference type="SUPFAM" id="SSF52121">
    <property type="entry name" value="Lumazine synthase"/>
    <property type="match status" value="1"/>
</dbReference>
<reference key="1">
    <citation type="submission" date="2009-01" db="EMBL/GenBank/DDBJ databases">
        <title>Complete sequence of Diaphorobacter sp. TPSY.</title>
        <authorList>
            <consortium name="US DOE Joint Genome Institute"/>
            <person name="Lucas S."/>
            <person name="Copeland A."/>
            <person name="Lapidus A."/>
            <person name="Glavina del Rio T."/>
            <person name="Tice H."/>
            <person name="Bruce D."/>
            <person name="Goodwin L."/>
            <person name="Pitluck S."/>
            <person name="Chertkov O."/>
            <person name="Brettin T."/>
            <person name="Detter J.C."/>
            <person name="Han C."/>
            <person name="Larimer F."/>
            <person name="Land M."/>
            <person name="Hauser L."/>
            <person name="Kyrpides N."/>
            <person name="Mikhailova N."/>
            <person name="Coates J.D."/>
        </authorList>
    </citation>
    <scope>NUCLEOTIDE SEQUENCE [LARGE SCALE GENOMIC DNA]</scope>
    <source>
        <strain>TPSY</strain>
    </source>
</reference>
<organism>
    <name type="scientific">Acidovorax ebreus (strain TPSY)</name>
    <name type="common">Diaphorobacter sp. (strain TPSY)</name>
    <dbReference type="NCBI Taxonomy" id="535289"/>
    <lineage>
        <taxon>Bacteria</taxon>
        <taxon>Pseudomonadati</taxon>
        <taxon>Pseudomonadota</taxon>
        <taxon>Betaproteobacteria</taxon>
        <taxon>Burkholderiales</taxon>
        <taxon>Comamonadaceae</taxon>
        <taxon>Diaphorobacter</taxon>
    </lineage>
</organism>
<accession>B9MBL6</accession>
<feature type="chain" id="PRO_1000195481" description="6,7-dimethyl-8-ribityllumazine synthase">
    <location>
        <begin position="1"/>
        <end position="154"/>
    </location>
</feature>
<feature type="active site" description="Proton donor" evidence="1">
    <location>
        <position position="92"/>
    </location>
</feature>
<feature type="binding site" evidence="1">
    <location>
        <position position="26"/>
    </location>
    <ligand>
        <name>5-amino-6-(D-ribitylamino)uracil</name>
        <dbReference type="ChEBI" id="CHEBI:15934"/>
    </ligand>
</feature>
<feature type="binding site" evidence="1">
    <location>
        <begin position="60"/>
        <end position="62"/>
    </location>
    <ligand>
        <name>5-amino-6-(D-ribitylamino)uracil</name>
        <dbReference type="ChEBI" id="CHEBI:15934"/>
    </ligand>
</feature>
<feature type="binding site" evidence="1">
    <location>
        <begin position="84"/>
        <end position="86"/>
    </location>
    <ligand>
        <name>5-amino-6-(D-ribitylamino)uracil</name>
        <dbReference type="ChEBI" id="CHEBI:15934"/>
    </ligand>
</feature>
<feature type="binding site" evidence="1">
    <location>
        <begin position="89"/>
        <end position="90"/>
    </location>
    <ligand>
        <name>(2S)-2-hydroxy-3-oxobutyl phosphate</name>
        <dbReference type="ChEBI" id="CHEBI:58830"/>
    </ligand>
</feature>
<feature type="binding site" evidence="1">
    <location>
        <position position="117"/>
    </location>
    <ligand>
        <name>5-amino-6-(D-ribitylamino)uracil</name>
        <dbReference type="ChEBI" id="CHEBI:15934"/>
    </ligand>
</feature>
<feature type="binding site" evidence="1">
    <location>
        <position position="131"/>
    </location>
    <ligand>
        <name>(2S)-2-hydroxy-3-oxobutyl phosphate</name>
        <dbReference type="ChEBI" id="CHEBI:58830"/>
    </ligand>
</feature>
<sequence>MFGADKGTADKLDGKKLHIGIVQARFNENITNTLAAACRAELLRLGVQEKHIRHVLVPGALEVPVALQALAERDEYDALIALGCIIRGETYHFELVANESGAGVTRLALDYQVPIANAIITTENLDQALARQTEKGVDAARVAVEMANLLEELS</sequence>
<name>RISB_ACIET</name>